<gene>
    <name type="primary">papA1</name>
    <name type="ordered locus">MT3932</name>
</gene>
<reference key="1">
    <citation type="journal article" date="2002" name="J. Bacteriol.">
        <title>Whole-genome comparison of Mycobacterium tuberculosis clinical and laboratory strains.</title>
        <authorList>
            <person name="Fleischmann R.D."/>
            <person name="Alland D."/>
            <person name="Eisen J.A."/>
            <person name="Carpenter L."/>
            <person name="White O."/>
            <person name="Peterson J.D."/>
            <person name="DeBoy R.T."/>
            <person name="Dodson R.J."/>
            <person name="Gwinn M.L."/>
            <person name="Haft D.H."/>
            <person name="Hickey E.K."/>
            <person name="Kolonay J.F."/>
            <person name="Nelson W.C."/>
            <person name="Umayam L.A."/>
            <person name="Ermolaeva M.D."/>
            <person name="Salzberg S.L."/>
            <person name="Delcher A."/>
            <person name="Utterback T.R."/>
            <person name="Weidman J.F."/>
            <person name="Khouri H.M."/>
            <person name="Gill J."/>
            <person name="Mikula A."/>
            <person name="Bishai W."/>
            <person name="Jacobs W.R. Jr."/>
            <person name="Venter J.C."/>
            <person name="Fraser C.M."/>
        </authorList>
    </citation>
    <scope>NUCLEOTIDE SEQUENCE [LARGE SCALE GENOMIC DNA]</scope>
    <source>
        <strain>CDC 1551 / Oshkosh</strain>
    </source>
</reference>
<proteinExistence type="inferred from homology"/>
<evidence type="ECO:0000250" key="1">
    <source>
        <dbReference type="UniProtKB" id="P9WIK9"/>
    </source>
</evidence>
<evidence type="ECO:0000305" key="2"/>
<dbReference type="EC" id="2.3.1.283" evidence="1"/>
<dbReference type="EMBL" id="AE000516">
    <property type="protein sequence ID" value="AAK48299.1"/>
    <property type="molecule type" value="Genomic_DNA"/>
</dbReference>
<dbReference type="PIR" id="D70522">
    <property type="entry name" value="D70522"/>
</dbReference>
<dbReference type="RefSeq" id="WP_010924723.1">
    <property type="nucleotide sequence ID" value="NZ_KK341227.1"/>
</dbReference>
<dbReference type="SMR" id="P9WIK8"/>
<dbReference type="KEGG" id="mtc:MT3932"/>
<dbReference type="PATRIC" id="fig|83331.31.peg.4230"/>
<dbReference type="HOGENOM" id="CLU_034647_1_0_11"/>
<dbReference type="Proteomes" id="UP000001020">
    <property type="component" value="Chromosome"/>
</dbReference>
<dbReference type="GO" id="GO:0016746">
    <property type="term" value="F:acyltransferase activity"/>
    <property type="evidence" value="ECO:0007669"/>
    <property type="project" value="UniProtKB-KW"/>
</dbReference>
<dbReference type="GO" id="GO:0071555">
    <property type="term" value="P:cell wall organization"/>
    <property type="evidence" value="ECO:0007669"/>
    <property type="project" value="UniProtKB-KW"/>
</dbReference>
<dbReference type="GO" id="GO:0008610">
    <property type="term" value="P:lipid biosynthetic process"/>
    <property type="evidence" value="ECO:0007669"/>
    <property type="project" value="UniProtKB-ARBA"/>
</dbReference>
<dbReference type="FunFam" id="3.30.559.10:FF:000022">
    <property type="entry name" value="Trehalose-2-sulfate acyltransferase papA2"/>
    <property type="match status" value="1"/>
</dbReference>
<dbReference type="FunFam" id="3.30.559.30:FF:000007">
    <property type="entry name" value="Trehalose-2-sulfate acyltransferase papA2"/>
    <property type="match status" value="1"/>
</dbReference>
<dbReference type="Gene3D" id="3.30.559.10">
    <property type="entry name" value="Chloramphenicol acetyltransferase-like domain"/>
    <property type="match status" value="1"/>
</dbReference>
<dbReference type="Gene3D" id="3.30.559.30">
    <property type="entry name" value="Nonribosomal peptide synthetase, condensation domain"/>
    <property type="match status" value="1"/>
</dbReference>
<dbReference type="InterPro" id="IPR023213">
    <property type="entry name" value="CAT-like_dom_sf"/>
</dbReference>
<dbReference type="InterPro" id="IPR001242">
    <property type="entry name" value="Condensatn"/>
</dbReference>
<dbReference type="Pfam" id="PF00668">
    <property type="entry name" value="Condensation"/>
    <property type="match status" value="1"/>
</dbReference>
<dbReference type="SUPFAM" id="SSF52777">
    <property type="entry name" value="CoA-dependent acyltransferases"/>
    <property type="match status" value="2"/>
</dbReference>
<comment type="function">
    <text evidence="1">Required for the biosynthesis of sulfolipid-1 (SL-1), a major mycobacterial cell wall lipid. Catalyzes the acylation of trehalose-2-sulfate-2'-palmitate (SL659) by adding the (hydroxy)phthioceranoyl group at the 3'-position to yield the diacylated intermediate 2-palmitoyl-3-(C43)-phthioceranyl-alpha, alpha'-D-trehalose-2'-sulfate (SL1278).</text>
</comment>
<comment type="catalytic activity">
    <reaction evidence="1">
        <text>a (hydroxy)phthioceranyl-[(hydroxy)phthioceranic acid synthase] + 2'-palmitoyl/stearoyl-2-O-sulfo-alpha,alpha-trehalose = a 3'-(hydroxy)phthioceranyl-2'-palmitoyl/stearoyl-2-O-sulfo-alpha,alpha-trehalose + holo-[(hydroxy)phthioceranic acid synthase].</text>
        <dbReference type="EC" id="2.3.1.283"/>
    </reaction>
</comment>
<comment type="similarity">
    <text evidence="2">Belongs to the PapA acyltransferase family.</text>
</comment>
<sequence length="511" mass="56110">MRIGPVELSAVKDWDPAPGVLVSWHPTPASCAKALAAPVSAVPPSYVQARQIRSFSEQAARGLDHSRLLIASVEVFGHCDLRAMTYVINAHLRRHDTYRSWFELRDTDHIVRHSIADPADIEFVPTTHGEMTSADLRQHIVATPDSLHWDCFSFGVIQRADSFTFYASIDHLHADGQFVGVGLMEFQSMYTALIMGEPPIGLSEAGSYVDFCVRQHEYTSALTVDSPEVRAWIDFAEINNGTFPEFPLPLGDPSVRCGGDLLSMMLMDEQQTQRFESACMAANARFIGGILACIAIAIHELTGADTYFGITPKDIRTPADLMTQGWFTGQIPVTVPVAGLSFNEIARIAQTSFDTGADLAKVPFERVVELSPSLRRPQPLFSLVNFFDAQVGPLSAVTKLFEGLNVGTYSDGRVTYPLSTMVGRFDETAASVLFPDNPVARESVTAYLRAIRSVCMRIANGGTAERVGNVVALSPGRRNNIERMTWRSCRAGDFIDICNLKVANVTVDREA</sequence>
<name>PAPA1_MYCTO</name>
<keyword id="KW-0012">Acyltransferase</keyword>
<keyword id="KW-0961">Cell wall biogenesis/degradation</keyword>
<keyword id="KW-0444">Lipid biosynthesis</keyword>
<keyword id="KW-0443">Lipid metabolism</keyword>
<keyword id="KW-1185">Reference proteome</keyword>
<keyword id="KW-0808">Transferase</keyword>
<accession>P9WIK8</accession>
<accession>L0TDN6</accession>
<accession>O07799</accession>
<accession>Q7D4T1</accession>
<protein>
    <recommendedName>
        <fullName evidence="1">2'-acyl-2-O-sulfo-trehalose (hydroxy)phthioceranyltransferase PapA1</fullName>
        <ecNumber evidence="1">2.3.1.283</ecNumber>
    </recommendedName>
    <alternativeName>
        <fullName>Polyketide synthase-associated protein A1</fullName>
    </alternativeName>
    <alternativeName>
        <fullName evidence="1">SL659 acyltransferase PapA1</fullName>
    </alternativeName>
</protein>
<feature type="chain" id="PRO_0000427989" description="2'-acyl-2-O-sulfo-trehalose (hydroxy)phthioceranyltransferase PapA1">
    <location>
        <begin position="1"/>
        <end position="511"/>
    </location>
</feature>
<organism>
    <name type="scientific">Mycobacterium tuberculosis (strain CDC 1551 / Oshkosh)</name>
    <dbReference type="NCBI Taxonomy" id="83331"/>
    <lineage>
        <taxon>Bacteria</taxon>
        <taxon>Bacillati</taxon>
        <taxon>Actinomycetota</taxon>
        <taxon>Actinomycetes</taxon>
        <taxon>Mycobacteriales</taxon>
        <taxon>Mycobacteriaceae</taxon>
        <taxon>Mycobacterium</taxon>
        <taxon>Mycobacterium tuberculosis complex</taxon>
    </lineage>
</organism>